<evidence type="ECO:0000255" key="1">
    <source>
        <dbReference type="HAMAP-Rule" id="MF_01385"/>
    </source>
</evidence>
<reference key="1">
    <citation type="submission" date="2006-08" db="EMBL/GenBank/DDBJ databases">
        <title>Complete sequence of chromosome 1 of Burkholderia cepacia AMMD.</title>
        <authorList>
            <person name="Copeland A."/>
            <person name="Lucas S."/>
            <person name="Lapidus A."/>
            <person name="Barry K."/>
            <person name="Detter J.C."/>
            <person name="Glavina del Rio T."/>
            <person name="Hammon N."/>
            <person name="Israni S."/>
            <person name="Pitluck S."/>
            <person name="Bruce D."/>
            <person name="Chain P."/>
            <person name="Malfatti S."/>
            <person name="Shin M."/>
            <person name="Vergez L."/>
            <person name="Schmutz J."/>
            <person name="Larimer F."/>
            <person name="Land M."/>
            <person name="Hauser L."/>
            <person name="Kyrpides N."/>
            <person name="Kim E."/>
            <person name="Parke J."/>
            <person name="Coenye T."/>
            <person name="Konstantinidis K."/>
            <person name="Ramette A."/>
            <person name="Tiedje J."/>
            <person name="Richardson P."/>
        </authorList>
    </citation>
    <scope>NUCLEOTIDE SEQUENCE [LARGE SCALE GENOMIC DNA]</scope>
    <source>
        <strain>ATCC BAA-244 / DSM 16087 / CCUG 44356 / LMG 19182 / AMMD</strain>
    </source>
</reference>
<name>UREF_BURCM</name>
<dbReference type="EMBL" id="CP000440">
    <property type="protein sequence ID" value="ABI86336.1"/>
    <property type="molecule type" value="Genomic_DNA"/>
</dbReference>
<dbReference type="RefSeq" id="WP_011656155.1">
    <property type="nucleotide sequence ID" value="NC_008390.1"/>
</dbReference>
<dbReference type="SMR" id="Q0BHN7"/>
<dbReference type="GeneID" id="93083815"/>
<dbReference type="KEGG" id="bam:Bamb_0777"/>
<dbReference type="PATRIC" id="fig|339670.21.peg.815"/>
<dbReference type="eggNOG" id="COG0830">
    <property type="taxonomic scope" value="Bacteria"/>
</dbReference>
<dbReference type="Proteomes" id="UP000000662">
    <property type="component" value="Chromosome 1"/>
</dbReference>
<dbReference type="GO" id="GO:0005737">
    <property type="term" value="C:cytoplasm"/>
    <property type="evidence" value="ECO:0007669"/>
    <property type="project" value="UniProtKB-SubCell"/>
</dbReference>
<dbReference type="GO" id="GO:0016151">
    <property type="term" value="F:nickel cation binding"/>
    <property type="evidence" value="ECO:0007669"/>
    <property type="project" value="UniProtKB-UniRule"/>
</dbReference>
<dbReference type="Gene3D" id="1.10.4190.10">
    <property type="entry name" value="Urease accessory protein UreF"/>
    <property type="match status" value="1"/>
</dbReference>
<dbReference type="HAMAP" id="MF_01385">
    <property type="entry name" value="UreF"/>
    <property type="match status" value="1"/>
</dbReference>
<dbReference type="InterPro" id="IPR002639">
    <property type="entry name" value="UreF"/>
</dbReference>
<dbReference type="InterPro" id="IPR038277">
    <property type="entry name" value="UreF_sf"/>
</dbReference>
<dbReference type="PANTHER" id="PTHR33620">
    <property type="entry name" value="UREASE ACCESSORY PROTEIN F"/>
    <property type="match status" value="1"/>
</dbReference>
<dbReference type="PANTHER" id="PTHR33620:SF1">
    <property type="entry name" value="UREASE ACCESSORY PROTEIN F"/>
    <property type="match status" value="1"/>
</dbReference>
<dbReference type="Pfam" id="PF01730">
    <property type="entry name" value="UreF"/>
    <property type="match status" value="1"/>
</dbReference>
<dbReference type="PIRSF" id="PIRSF009467">
    <property type="entry name" value="Ureas_acces_UreF"/>
    <property type="match status" value="1"/>
</dbReference>
<feature type="chain" id="PRO_0000344096" description="Urease accessory protein UreF">
    <location>
        <begin position="1"/>
        <end position="226"/>
    </location>
</feature>
<comment type="function">
    <text evidence="1">Required for maturation of urease via the functional incorporation of the urease nickel metallocenter.</text>
</comment>
<comment type="subunit">
    <text evidence="1">UreD, UreF and UreG form a complex that acts as a GTP-hydrolysis-dependent molecular chaperone, activating the urease apoprotein by helping to assemble the nickel containing metallocenter of UreC. The UreE protein probably delivers the nickel.</text>
</comment>
<comment type="subcellular location">
    <subcellularLocation>
        <location evidence="1">Cytoplasm</location>
    </subcellularLocation>
</comment>
<comment type="similarity">
    <text evidence="1">Belongs to the UreF family.</text>
</comment>
<protein>
    <recommendedName>
        <fullName evidence="1">Urease accessory protein UreF</fullName>
    </recommendedName>
</protein>
<keyword id="KW-0143">Chaperone</keyword>
<keyword id="KW-0963">Cytoplasm</keyword>
<keyword id="KW-0996">Nickel insertion</keyword>
<accession>Q0BHN7</accession>
<organism>
    <name type="scientific">Burkholderia ambifaria (strain ATCC BAA-244 / DSM 16087 / CCUG 44356 / LMG 19182 / AMMD)</name>
    <name type="common">Burkholderia cepacia (strain AMMD)</name>
    <dbReference type="NCBI Taxonomy" id="339670"/>
    <lineage>
        <taxon>Bacteria</taxon>
        <taxon>Pseudomonadati</taxon>
        <taxon>Pseudomonadota</taxon>
        <taxon>Betaproteobacteria</taxon>
        <taxon>Burkholderiales</taxon>
        <taxon>Burkholderiaceae</taxon>
        <taxon>Burkholderia</taxon>
        <taxon>Burkholderia cepacia complex</taxon>
    </lineage>
</organism>
<proteinExistence type="inferred from homology"/>
<gene>
    <name evidence="1" type="primary">ureF</name>
    <name type="ordered locus">Bamb_0777</name>
</gene>
<sequence length="226" mass="24169">MTTTELVALLHLASPALPIGAFSYSQGFEAALDANLIRDADTARDWIAGGLTDVLAHGELPFLAHQLARWHAHDADALARENAWFVASRESAELRRETEQMGWSLAQLCTSLEWGDTARRATLATISPIALPTAFAYAAAAHDASADAVLAAYAFGWVENQTSAALKAVPLGQLAGQRIIVALRGAIDAAVRRALATPPDAVNTFAPQLGILSARHETQYSRLFRS</sequence>